<accession>Q55891</accession>
<reference key="1">
    <citation type="journal article" date="1995" name="DNA Res.">
        <title>Sequence analysis of the genome of the unicellular cyanobacterium Synechocystis sp. strain PCC6803. I. Sequence features in the 1 Mb region from map positions 64% to 92% of the genome.</title>
        <authorList>
            <person name="Kaneko T."/>
            <person name="Tanaka A."/>
            <person name="Sato S."/>
            <person name="Kotani H."/>
            <person name="Sazuka T."/>
            <person name="Miyajima N."/>
            <person name="Sugiura M."/>
            <person name="Tabata S."/>
        </authorList>
    </citation>
    <scope>NUCLEOTIDE SEQUENCE [LARGE SCALE GENOMIC DNA]</scope>
    <source>
        <strain>ATCC 27184 / PCC 6803 / N-1</strain>
    </source>
</reference>
<reference key="2">
    <citation type="journal article" date="1996" name="DNA Res.">
        <title>Sequence analysis of the genome of the unicellular cyanobacterium Synechocystis sp. strain PCC6803. II. Sequence determination of the entire genome and assignment of potential protein-coding regions.</title>
        <authorList>
            <person name="Kaneko T."/>
            <person name="Sato S."/>
            <person name="Kotani H."/>
            <person name="Tanaka A."/>
            <person name="Asamizu E."/>
            <person name="Nakamura Y."/>
            <person name="Miyajima N."/>
            <person name="Hirosawa M."/>
            <person name="Sugiura M."/>
            <person name="Sasamoto S."/>
            <person name="Kimura T."/>
            <person name="Hosouchi T."/>
            <person name="Matsuno A."/>
            <person name="Muraki A."/>
            <person name="Nakazaki N."/>
            <person name="Naruo K."/>
            <person name="Okumura S."/>
            <person name="Shimpo S."/>
            <person name="Takeuchi C."/>
            <person name="Wada T."/>
            <person name="Watanabe A."/>
            <person name="Yamada M."/>
            <person name="Yasuda M."/>
            <person name="Tabata S."/>
        </authorList>
    </citation>
    <scope>NUCLEOTIDE SEQUENCE [LARGE SCALE GENOMIC DNA]</scope>
    <source>
        <strain>ATCC 27184 / PCC 6803 / Kazusa</strain>
    </source>
</reference>
<sequence>MAVTDLSLTNSSLMPTLNPMIQQLALAIAASWQSLPLKPYQLPEDLGYVEGRLEGEKLVIENRCYQTPQFRKMHLELAKVGKGLDILHCVMFPEPLYGLPLFGCDIVAGPGGVSAAIADLSPTQSDRQLPAAYQKSLAELGQPEFEQQRELPPWGEIFSEYCLFIRPSNVTEEERFVQRVVDFLQIHCHQSIVAEPLSEAQTLEHRQGQIHYCQQQQKNDKTRRVLEKAFGEAWAERYMSQVLFDVIQ</sequence>
<dbReference type="EC" id="1.3.7.5"/>
<dbReference type="EMBL" id="BA000022">
    <property type="protein sequence ID" value="BAA10653.1"/>
    <property type="molecule type" value="Genomic_DNA"/>
</dbReference>
<dbReference type="PIR" id="S76709">
    <property type="entry name" value="S76709"/>
</dbReference>
<dbReference type="PDB" id="2D1E">
    <property type="method" value="X-ray"/>
    <property type="resolution" value="1.51 A"/>
    <property type="chains" value="A=1-248"/>
</dbReference>
<dbReference type="PDB" id="2DKE">
    <property type="method" value="X-ray"/>
    <property type="resolution" value="2.50 A"/>
    <property type="chains" value="A=1-248"/>
</dbReference>
<dbReference type="PDB" id="3AJG">
    <property type="method" value="X-ray"/>
    <property type="resolution" value="1.90 A"/>
    <property type="chains" value="A/B=1-248"/>
</dbReference>
<dbReference type="PDB" id="3AJH">
    <property type="method" value="X-ray"/>
    <property type="resolution" value="2.25 A"/>
    <property type="chains" value="A/B=1-248"/>
</dbReference>
<dbReference type="PDB" id="3F0L">
    <property type="method" value="X-ray"/>
    <property type="resolution" value="1.30 A"/>
    <property type="chains" value="A=1-248"/>
</dbReference>
<dbReference type="PDB" id="3F0M">
    <property type="method" value="X-ray"/>
    <property type="resolution" value="1.50 A"/>
    <property type="chains" value="A=1-248"/>
</dbReference>
<dbReference type="PDB" id="3I8U">
    <property type="method" value="X-ray"/>
    <property type="resolution" value="1.48 A"/>
    <property type="chains" value="X=1-248"/>
</dbReference>
<dbReference type="PDB" id="3I94">
    <property type="method" value="X-ray"/>
    <property type="resolution" value="1.04 A"/>
    <property type="chains" value="A=1-248"/>
</dbReference>
<dbReference type="PDB" id="3I95">
    <property type="method" value="X-ray"/>
    <property type="resolution" value="1.40 A"/>
    <property type="chains" value="A=1-248"/>
</dbReference>
<dbReference type="PDB" id="3NB8">
    <property type="method" value="X-ray"/>
    <property type="resolution" value="1.30 A"/>
    <property type="chains" value="A=1-248"/>
</dbReference>
<dbReference type="PDB" id="3NB9">
    <property type="method" value="X-ray"/>
    <property type="resolution" value="1.50 A"/>
    <property type="chains" value="A=1-248"/>
</dbReference>
<dbReference type="PDB" id="4EOC">
    <property type="method" value="X-ray"/>
    <property type="resolution" value="1.49 A"/>
    <property type="chains" value="A=8-246"/>
</dbReference>
<dbReference type="PDB" id="4EOD">
    <property type="method" value="X-ray"/>
    <property type="resolution" value="1.30 A"/>
    <property type="chains" value="A=1-248"/>
</dbReference>
<dbReference type="PDB" id="4EOE">
    <property type="method" value="X-ray"/>
    <property type="resolution" value="1.20 A"/>
    <property type="chains" value="A=1-248"/>
</dbReference>
<dbReference type="PDB" id="4QCD">
    <property type="method" value="Other"/>
    <property type="resolution" value="1.93 A"/>
    <property type="chains" value="A=1-248"/>
</dbReference>
<dbReference type="PDB" id="5B4H">
    <property type="method" value="X-ray"/>
    <property type="resolution" value="1.11 A"/>
    <property type="chains" value="A=1-248"/>
</dbReference>
<dbReference type="PDB" id="5B4I">
    <property type="method" value="X-ray"/>
    <property type="resolution" value="1.11 A"/>
    <property type="chains" value="A=1-248"/>
</dbReference>
<dbReference type="PDB" id="5B4J">
    <property type="method" value="X-ray"/>
    <property type="resolution" value="1.05 A"/>
    <property type="chains" value="A=1-248"/>
</dbReference>
<dbReference type="PDB" id="7YK9">
    <property type="method" value="Other"/>
    <property type="resolution" value="1.90 A"/>
    <property type="chains" value="A=1-248"/>
</dbReference>
<dbReference type="PDB" id="7YKB">
    <property type="method" value="Other"/>
    <property type="resolution" value="1.38 A"/>
    <property type="chains" value="A=1-248"/>
</dbReference>
<dbReference type="PDBsum" id="2D1E"/>
<dbReference type="PDBsum" id="2DKE"/>
<dbReference type="PDBsum" id="3AJG"/>
<dbReference type="PDBsum" id="3AJH"/>
<dbReference type="PDBsum" id="3F0L"/>
<dbReference type="PDBsum" id="3F0M"/>
<dbReference type="PDBsum" id="3I8U"/>
<dbReference type="PDBsum" id="3I94"/>
<dbReference type="PDBsum" id="3I95"/>
<dbReference type="PDBsum" id="3NB8"/>
<dbReference type="PDBsum" id="3NB9"/>
<dbReference type="PDBsum" id="4EOC"/>
<dbReference type="PDBsum" id="4EOD"/>
<dbReference type="PDBsum" id="4EOE"/>
<dbReference type="PDBsum" id="4QCD"/>
<dbReference type="PDBsum" id="5B4H"/>
<dbReference type="PDBsum" id="5B4I"/>
<dbReference type="PDBsum" id="5B4J"/>
<dbReference type="PDBsum" id="7YK9"/>
<dbReference type="PDBsum" id="7YKB"/>
<dbReference type="SMR" id="Q55891"/>
<dbReference type="IntAct" id="Q55891">
    <property type="interactions" value="1"/>
</dbReference>
<dbReference type="STRING" id="1148.gene:10500158"/>
<dbReference type="PaxDb" id="1148-1208485"/>
<dbReference type="EnsemblBacteria" id="BAA10653">
    <property type="protein sequence ID" value="BAA10653"/>
    <property type="gene ID" value="BAA10653"/>
</dbReference>
<dbReference type="KEGG" id="syn:slr0116"/>
<dbReference type="eggNOG" id="ENOG502Z7RN">
    <property type="taxonomic scope" value="Bacteria"/>
</dbReference>
<dbReference type="InParanoid" id="Q55891"/>
<dbReference type="PhylomeDB" id="Q55891"/>
<dbReference type="BioCyc" id="MetaCyc:MONOMER-13954"/>
<dbReference type="BRENDA" id="1.3.7.5">
    <property type="organism ID" value="382"/>
</dbReference>
<dbReference type="EvolutionaryTrace" id="Q55891"/>
<dbReference type="Proteomes" id="UP000001425">
    <property type="component" value="Chromosome"/>
</dbReference>
<dbReference type="GO" id="GO:0050897">
    <property type="term" value="F:cobalt ion binding"/>
    <property type="evidence" value="ECO:0007669"/>
    <property type="project" value="InterPro"/>
</dbReference>
<dbReference type="GO" id="GO:0050620">
    <property type="term" value="F:phycocyanobilin:ferredoxin oxidoreductase activity"/>
    <property type="evidence" value="ECO:0007669"/>
    <property type="project" value="UniProtKB-UniRule"/>
</dbReference>
<dbReference type="GO" id="GO:0010024">
    <property type="term" value="P:phytochromobilin biosynthetic process"/>
    <property type="evidence" value="ECO:0007669"/>
    <property type="project" value="InterPro"/>
</dbReference>
<dbReference type="Gene3D" id="3.40.1500.20">
    <property type="match status" value="1"/>
</dbReference>
<dbReference type="HAMAP" id="MF_00618">
    <property type="entry name" value="Ferredoxin_bilin_red"/>
    <property type="match status" value="1"/>
</dbReference>
<dbReference type="InterPro" id="IPR009249">
    <property type="entry name" value="Ferredoxin-dep_bilin_Rdtase"/>
</dbReference>
<dbReference type="InterPro" id="IPR022870">
    <property type="entry name" value="Ferredoxin_bilin_OxRdtase"/>
</dbReference>
<dbReference type="NCBIfam" id="NF002760">
    <property type="entry name" value="PRK02816.1"/>
    <property type="match status" value="1"/>
</dbReference>
<dbReference type="PANTHER" id="PTHR34557">
    <property type="entry name" value="PHYTOCHROMOBILIN:FERREDOXIN OXIDOREDUCTASE, CHLOROPLASTIC"/>
    <property type="match status" value="1"/>
</dbReference>
<dbReference type="PANTHER" id="PTHR34557:SF1">
    <property type="entry name" value="PHYTOCHROMOBILIN:FERREDOXIN OXIDOREDUCTASE, CHLOROPLASTIC"/>
    <property type="match status" value="1"/>
</dbReference>
<dbReference type="Pfam" id="PF05996">
    <property type="entry name" value="Fe_bilin_red"/>
    <property type="match status" value="1"/>
</dbReference>
<comment type="function">
    <text evidence="1">Catalyzes the four-electron reduction of biliverdin IX-alpha (2-electron reduction at both the A and D rings); the reaction proceeds via an isolatable 2-electron intermediate, 181,182-dihydrobiliverdin.</text>
</comment>
<comment type="catalytic activity">
    <reaction>
        <text>(2R,3Z)-phycocyanobilin + 4 oxidized [2Fe-2S]-[ferredoxin] = biliverdin IXalpha + 4 reduced [2Fe-2S]-[ferredoxin] + 4 H(+)</text>
        <dbReference type="Rhea" id="RHEA:15309"/>
        <dbReference type="Rhea" id="RHEA-COMP:10000"/>
        <dbReference type="Rhea" id="RHEA-COMP:10001"/>
        <dbReference type="ChEBI" id="CHEBI:15378"/>
        <dbReference type="ChEBI" id="CHEBI:33737"/>
        <dbReference type="ChEBI" id="CHEBI:33738"/>
        <dbReference type="ChEBI" id="CHEBI:57437"/>
        <dbReference type="ChEBI" id="CHEBI:57991"/>
        <dbReference type="EC" id="1.3.7.5"/>
    </reaction>
</comment>
<comment type="similarity">
    <text evidence="2">Belongs to the HY2 family.</text>
</comment>
<evidence type="ECO:0000250" key="1"/>
<evidence type="ECO:0000305" key="2"/>
<evidence type="ECO:0007829" key="3">
    <source>
        <dbReference type="PDB" id="3AJH"/>
    </source>
</evidence>
<evidence type="ECO:0007829" key="4">
    <source>
        <dbReference type="PDB" id="3I94"/>
    </source>
</evidence>
<feature type="chain" id="PRO_0000216747" description="Phycocyanobilin:ferredoxin oxidoreductase">
    <location>
        <begin position="1"/>
        <end position="248"/>
    </location>
</feature>
<feature type="helix" evidence="4">
    <location>
        <begin position="8"/>
        <end position="10"/>
    </location>
</feature>
<feature type="helix" evidence="4">
    <location>
        <begin position="14"/>
        <end position="16"/>
    </location>
</feature>
<feature type="helix" evidence="4">
    <location>
        <begin position="19"/>
        <end position="32"/>
    </location>
</feature>
<feature type="helix" evidence="4">
    <location>
        <begin position="43"/>
        <end position="45"/>
    </location>
</feature>
<feature type="strand" evidence="4">
    <location>
        <begin position="49"/>
        <end position="51"/>
    </location>
</feature>
<feature type="strand" evidence="4">
    <location>
        <begin position="53"/>
        <end position="55"/>
    </location>
</feature>
<feature type="strand" evidence="4">
    <location>
        <begin position="58"/>
        <end position="66"/>
    </location>
</feature>
<feature type="strand" evidence="4">
    <location>
        <begin position="68"/>
        <end position="80"/>
    </location>
</feature>
<feature type="turn" evidence="4">
    <location>
        <begin position="81"/>
        <end position="83"/>
    </location>
</feature>
<feature type="strand" evidence="4">
    <location>
        <begin position="84"/>
        <end position="93"/>
    </location>
</feature>
<feature type="helix" evidence="4">
    <location>
        <begin position="95"/>
        <end position="97"/>
    </location>
</feature>
<feature type="strand" evidence="4">
    <location>
        <begin position="101"/>
        <end position="109"/>
    </location>
</feature>
<feature type="strand" evidence="4">
    <location>
        <begin position="112"/>
        <end position="121"/>
    </location>
</feature>
<feature type="strand" evidence="3">
    <location>
        <begin position="124"/>
        <end position="126"/>
    </location>
</feature>
<feature type="helix" evidence="4">
    <location>
        <begin position="131"/>
        <end position="139"/>
    </location>
</feature>
<feature type="strand" evidence="4">
    <location>
        <begin position="146"/>
        <end position="148"/>
    </location>
</feature>
<feature type="helix" evidence="4">
    <location>
        <begin position="153"/>
        <end position="157"/>
    </location>
</feature>
<feature type="strand" evidence="4">
    <location>
        <begin position="163"/>
        <end position="165"/>
    </location>
</feature>
<feature type="helix" evidence="4">
    <location>
        <begin position="170"/>
        <end position="193"/>
    </location>
</feature>
<feature type="helix" evidence="4">
    <location>
        <begin position="199"/>
        <end position="216"/>
    </location>
</feature>
<feature type="helix" evidence="4">
    <location>
        <begin position="220"/>
        <end position="230"/>
    </location>
</feature>
<feature type="helix" evidence="4">
    <location>
        <begin position="232"/>
        <end position="241"/>
    </location>
</feature>
<keyword id="KW-0002">3D-structure</keyword>
<keyword id="KW-0560">Oxidoreductase</keyword>
<keyword id="KW-1185">Reference proteome</keyword>
<organism>
    <name type="scientific">Synechocystis sp. (strain ATCC 27184 / PCC 6803 / Kazusa)</name>
    <dbReference type="NCBI Taxonomy" id="1111708"/>
    <lineage>
        <taxon>Bacteria</taxon>
        <taxon>Bacillati</taxon>
        <taxon>Cyanobacteriota</taxon>
        <taxon>Cyanophyceae</taxon>
        <taxon>Synechococcales</taxon>
        <taxon>Merismopediaceae</taxon>
        <taxon>Synechocystis</taxon>
    </lineage>
</organism>
<gene>
    <name type="primary">pcyA</name>
    <name type="ordered locus">slr0116</name>
</gene>
<protein>
    <recommendedName>
        <fullName>Phycocyanobilin:ferredoxin oxidoreductase</fullName>
        <ecNumber>1.3.7.5</ecNumber>
    </recommendedName>
</protein>
<name>PCYA_SYNY3</name>
<proteinExistence type="evidence at protein level"/>